<organism>
    <name type="scientific">Rhodopseudomonas palustris (strain BisB5)</name>
    <dbReference type="NCBI Taxonomy" id="316057"/>
    <lineage>
        <taxon>Bacteria</taxon>
        <taxon>Pseudomonadati</taxon>
        <taxon>Pseudomonadota</taxon>
        <taxon>Alphaproteobacteria</taxon>
        <taxon>Hyphomicrobiales</taxon>
        <taxon>Nitrobacteraceae</taxon>
        <taxon>Rhodopseudomonas</taxon>
    </lineage>
</organism>
<gene>
    <name evidence="1" type="primary">glmU</name>
    <name type="ordered locus">RPD_2617</name>
</gene>
<accession>Q136Z3</accession>
<keyword id="KW-0012">Acyltransferase</keyword>
<keyword id="KW-0133">Cell shape</keyword>
<keyword id="KW-0961">Cell wall biogenesis/degradation</keyword>
<keyword id="KW-0963">Cytoplasm</keyword>
<keyword id="KW-0460">Magnesium</keyword>
<keyword id="KW-0479">Metal-binding</keyword>
<keyword id="KW-0511">Multifunctional enzyme</keyword>
<keyword id="KW-0548">Nucleotidyltransferase</keyword>
<keyword id="KW-0573">Peptidoglycan synthesis</keyword>
<keyword id="KW-0677">Repeat</keyword>
<keyword id="KW-0808">Transferase</keyword>
<dbReference type="EC" id="2.7.7.23" evidence="1"/>
<dbReference type="EC" id="2.3.1.157" evidence="1"/>
<dbReference type="EMBL" id="CP000283">
    <property type="protein sequence ID" value="ABE39846.1"/>
    <property type="molecule type" value="Genomic_DNA"/>
</dbReference>
<dbReference type="SMR" id="Q136Z3"/>
<dbReference type="STRING" id="316057.RPD_2617"/>
<dbReference type="KEGG" id="rpd:RPD_2617"/>
<dbReference type="eggNOG" id="COG1207">
    <property type="taxonomic scope" value="Bacteria"/>
</dbReference>
<dbReference type="HOGENOM" id="CLU_029499_15_2_5"/>
<dbReference type="BioCyc" id="RPAL316057:RPD_RS13165-MONOMER"/>
<dbReference type="UniPathway" id="UPA00113">
    <property type="reaction ID" value="UER00532"/>
</dbReference>
<dbReference type="UniPathway" id="UPA00113">
    <property type="reaction ID" value="UER00533"/>
</dbReference>
<dbReference type="UniPathway" id="UPA00973"/>
<dbReference type="Proteomes" id="UP000001818">
    <property type="component" value="Chromosome"/>
</dbReference>
<dbReference type="GO" id="GO:0005737">
    <property type="term" value="C:cytoplasm"/>
    <property type="evidence" value="ECO:0007669"/>
    <property type="project" value="UniProtKB-SubCell"/>
</dbReference>
<dbReference type="GO" id="GO:0016020">
    <property type="term" value="C:membrane"/>
    <property type="evidence" value="ECO:0007669"/>
    <property type="project" value="GOC"/>
</dbReference>
<dbReference type="GO" id="GO:0019134">
    <property type="term" value="F:glucosamine-1-phosphate N-acetyltransferase activity"/>
    <property type="evidence" value="ECO:0007669"/>
    <property type="project" value="UniProtKB-UniRule"/>
</dbReference>
<dbReference type="GO" id="GO:0000287">
    <property type="term" value="F:magnesium ion binding"/>
    <property type="evidence" value="ECO:0007669"/>
    <property type="project" value="UniProtKB-UniRule"/>
</dbReference>
<dbReference type="GO" id="GO:0003977">
    <property type="term" value="F:UDP-N-acetylglucosamine diphosphorylase activity"/>
    <property type="evidence" value="ECO:0007669"/>
    <property type="project" value="UniProtKB-UniRule"/>
</dbReference>
<dbReference type="GO" id="GO:0000902">
    <property type="term" value="P:cell morphogenesis"/>
    <property type="evidence" value="ECO:0007669"/>
    <property type="project" value="UniProtKB-UniRule"/>
</dbReference>
<dbReference type="GO" id="GO:0071555">
    <property type="term" value="P:cell wall organization"/>
    <property type="evidence" value="ECO:0007669"/>
    <property type="project" value="UniProtKB-KW"/>
</dbReference>
<dbReference type="GO" id="GO:0009245">
    <property type="term" value="P:lipid A biosynthetic process"/>
    <property type="evidence" value="ECO:0007669"/>
    <property type="project" value="UniProtKB-UniRule"/>
</dbReference>
<dbReference type="GO" id="GO:0009252">
    <property type="term" value="P:peptidoglycan biosynthetic process"/>
    <property type="evidence" value="ECO:0007669"/>
    <property type="project" value="UniProtKB-UniRule"/>
</dbReference>
<dbReference type="GO" id="GO:0008360">
    <property type="term" value="P:regulation of cell shape"/>
    <property type="evidence" value="ECO:0007669"/>
    <property type="project" value="UniProtKB-KW"/>
</dbReference>
<dbReference type="GO" id="GO:0006048">
    <property type="term" value="P:UDP-N-acetylglucosamine biosynthetic process"/>
    <property type="evidence" value="ECO:0007669"/>
    <property type="project" value="UniProtKB-UniPathway"/>
</dbReference>
<dbReference type="CDD" id="cd02540">
    <property type="entry name" value="GT2_GlmU_N_bac"/>
    <property type="match status" value="1"/>
</dbReference>
<dbReference type="CDD" id="cd03353">
    <property type="entry name" value="LbH_GlmU_C"/>
    <property type="match status" value="1"/>
</dbReference>
<dbReference type="Gene3D" id="2.160.10.10">
    <property type="entry name" value="Hexapeptide repeat proteins"/>
    <property type="match status" value="1"/>
</dbReference>
<dbReference type="Gene3D" id="3.90.550.10">
    <property type="entry name" value="Spore Coat Polysaccharide Biosynthesis Protein SpsA, Chain A"/>
    <property type="match status" value="1"/>
</dbReference>
<dbReference type="HAMAP" id="MF_01631">
    <property type="entry name" value="GlmU"/>
    <property type="match status" value="1"/>
</dbReference>
<dbReference type="InterPro" id="IPR005882">
    <property type="entry name" value="Bifunctional_GlmU"/>
</dbReference>
<dbReference type="InterPro" id="IPR050065">
    <property type="entry name" value="GlmU-like"/>
</dbReference>
<dbReference type="InterPro" id="IPR038009">
    <property type="entry name" value="GlmU_C_LbH"/>
</dbReference>
<dbReference type="InterPro" id="IPR001451">
    <property type="entry name" value="Hexapep"/>
</dbReference>
<dbReference type="InterPro" id="IPR018357">
    <property type="entry name" value="Hexapep_transf_CS"/>
</dbReference>
<dbReference type="InterPro" id="IPR025877">
    <property type="entry name" value="MobA-like_NTP_Trfase"/>
</dbReference>
<dbReference type="InterPro" id="IPR029044">
    <property type="entry name" value="Nucleotide-diphossugar_trans"/>
</dbReference>
<dbReference type="InterPro" id="IPR011004">
    <property type="entry name" value="Trimer_LpxA-like_sf"/>
</dbReference>
<dbReference type="NCBIfam" id="TIGR01173">
    <property type="entry name" value="glmU"/>
    <property type="match status" value="1"/>
</dbReference>
<dbReference type="NCBIfam" id="NF010933">
    <property type="entry name" value="PRK14353.1"/>
    <property type="match status" value="1"/>
</dbReference>
<dbReference type="PANTHER" id="PTHR43584:SF3">
    <property type="entry name" value="BIFUNCTIONAL PROTEIN GLMU"/>
    <property type="match status" value="1"/>
</dbReference>
<dbReference type="PANTHER" id="PTHR43584">
    <property type="entry name" value="NUCLEOTIDYL TRANSFERASE"/>
    <property type="match status" value="1"/>
</dbReference>
<dbReference type="Pfam" id="PF00132">
    <property type="entry name" value="Hexapep"/>
    <property type="match status" value="2"/>
</dbReference>
<dbReference type="Pfam" id="PF12804">
    <property type="entry name" value="NTP_transf_3"/>
    <property type="match status" value="1"/>
</dbReference>
<dbReference type="SUPFAM" id="SSF53448">
    <property type="entry name" value="Nucleotide-diphospho-sugar transferases"/>
    <property type="match status" value="1"/>
</dbReference>
<dbReference type="SUPFAM" id="SSF51161">
    <property type="entry name" value="Trimeric LpxA-like enzymes"/>
    <property type="match status" value="1"/>
</dbReference>
<dbReference type="PROSITE" id="PS00101">
    <property type="entry name" value="HEXAPEP_TRANSFERASES"/>
    <property type="match status" value="1"/>
</dbReference>
<proteinExistence type="inferred from homology"/>
<evidence type="ECO:0000255" key="1">
    <source>
        <dbReference type="HAMAP-Rule" id="MF_01631"/>
    </source>
</evidence>
<protein>
    <recommendedName>
        <fullName evidence="1">Bifunctional protein GlmU</fullName>
    </recommendedName>
    <domain>
        <recommendedName>
            <fullName evidence="1">UDP-N-acetylglucosamine pyrophosphorylase</fullName>
            <ecNumber evidence="1">2.7.7.23</ecNumber>
        </recommendedName>
        <alternativeName>
            <fullName evidence="1">N-acetylglucosamine-1-phosphate uridyltransferase</fullName>
        </alternativeName>
    </domain>
    <domain>
        <recommendedName>
            <fullName evidence="1">Glucosamine-1-phosphate N-acetyltransferase</fullName>
            <ecNumber evidence="1">2.3.1.157</ecNumber>
        </recommendedName>
    </domain>
</protein>
<comment type="function">
    <text evidence="1">Catalyzes the last two sequential reactions in the de novo biosynthetic pathway for UDP-N-acetylglucosamine (UDP-GlcNAc). The C-terminal domain catalyzes the transfer of acetyl group from acetyl coenzyme A to glucosamine-1-phosphate (GlcN-1-P) to produce N-acetylglucosamine-1-phosphate (GlcNAc-1-P), which is converted into UDP-GlcNAc by the transfer of uridine 5-monophosphate (from uridine 5-triphosphate), a reaction catalyzed by the N-terminal domain.</text>
</comment>
<comment type="catalytic activity">
    <reaction evidence="1">
        <text>alpha-D-glucosamine 1-phosphate + acetyl-CoA = N-acetyl-alpha-D-glucosamine 1-phosphate + CoA + H(+)</text>
        <dbReference type="Rhea" id="RHEA:13725"/>
        <dbReference type="ChEBI" id="CHEBI:15378"/>
        <dbReference type="ChEBI" id="CHEBI:57287"/>
        <dbReference type="ChEBI" id="CHEBI:57288"/>
        <dbReference type="ChEBI" id="CHEBI:57776"/>
        <dbReference type="ChEBI" id="CHEBI:58516"/>
        <dbReference type="EC" id="2.3.1.157"/>
    </reaction>
</comment>
<comment type="catalytic activity">
    <reaction evidence="1">
        <text>N-acetyl-alpha-D-glucosamine 1-phosphate + UTP + H(+) = UDP-N-acetyl-alpha-D-glucosamine + diphosphate</text>
        <dbReference type="Rhea" id="RHEA:13509"/>
        <dbReference type="ChEBI" id="CHEBI:15378"/>
        <dbReference type="ChEBI" id="CHEBI:33019"/>
        <dbReference type="ChEBI" id="CHEBI:46398"/>
        <dbReference type="ChEBI" id="CHEBI:57705"/>
        <dbReference type="ChEBI" id="CHEBI:57776"/>
        <dbReference type="EC" id="2.7.7.23"/>
    </reaction>
</comment>
<comment type="cofactor">
    <cofactor evidence="1">
        <name>Mg(2+)</name>
        <dbReference type="ChEBI" id="CHEBI:18420"/>
    </cofactor>
    <text evidence="1">Binds 1 Mg(2+) ion per subunit.</text>
</comment>
<comment type="pathway">
    <text evidence="1">Nucleotide-sugar biosynthesis; UDP-N-acetyl-alpha-D-glucosamine biosynthesis; N-acetyl-alpha-D-glucosamine 1-phosphate from alpha-D-glucosamine 6-phosphate (route II): step 2/2.</text>
</comment>
<comment type="pathway">
    <text evidence="1">Nucleotide-sugar biosynthesis; UDP-N-acetyl-alpha-D-glucosamine biosynthesis; UDP-N-acetyl-alpha-D-glucosamine from N-acetyl-alpha-D-glucosamine 1-phosphate: step 1/1.</text>
</comment>
<comment type="pathway">
    <text evidence="1">Bacterial outer membrane biogenesis; LPS lipid A biosynthesis.</text>
</comment>
<comment type="subunit">
    <text evidence="1">Homotrimer.</text>
</comment>
<comment type="subcellular location">
    <subcellularLocation>
        <location evidence="1">Cytoplasm</location>
    </subcellularLocation>
</comment>
<comment type="similarity">
    <text evidence="1">In the N-terminal section; belongs to the N-acetylglucosamine-1-phosphate uridyltransferase family.</text>
</comment>
<comment type="similarity">
    <text evidence="1">In the C-terminal section; belongs to the transferase hexapeptide repeat family.</text>
</comment>
<feature type="chain" id="PRO_0000263150" description="Bifunctional protein GlmU">
    <location>
        <begin position="1"/>
        <end position="452"/>
    </location>
</feature>
<feature type="region of interest" description="Pyrophosphorylase" evidence="1">
    <location>
        <begin position="1"/>
        <end position="232"/>
    </location>
</feature>
<feature type="region of interest" description="Linker" evidence="1">
    <location>
        <begin position="233"/>
        <end position="253"/>
    </location>
</feature>
<feature type="region of interest" description="N-acetyltransferase" evidence="1">
    <location>
        <begin position="254"/>
        <end position="452"/>
    </location>
</feature>
<feature type="active site" description="Proton acceptor" evidence="1">
    <location>
        <position position="349"/>
    </location>
</feature>
<feature type="binding site" evidence="1">
    <location>
        <begin position="11"/>
        <end position="14"/>
    </location>
    <ligand>
        <name>UDP-N-acetyl-alpha-D-glucosamine</name>
        <dbReference type="ChEBI" id="CHEBI:57705"/>
    </ligand>
</feature>
<feature type="binding site" evidence="1">
    <location>
        <position position="25"/>
    </location>
    <ligand>
        <name>UDP-N-acetyl-alpha-D-glucosamine</name>
        <dbReference type="ChEBI" id="CHEBI:57705"/>
    </ligand>
</feature>
<feature type="binding site" evidence="1">
    <location>
        <position position="78"/>
    </location>
    <ligand>
        <name>UDP-N-acetyl-alpha-D-glucosamine</name>
        <dbReference type="ChEBI" id="CHEBI:57705"/>
    </ligand>
</feature>
<feature type="binding site" evidence="1">
    <location>
        <begin position="83"/>
        <end position="84"/>
    </location>
    <ligand>
        <name>UDP-N-acetyl-alpha-D-glucosamine</name>
        <dbReference type="ChEBI" id="CHEBI:57705"/>
    </ligand>
</feature>
<feature type="binding site" evidence="1">
    <location>
        <position position="108"/>
    </location>
    <ligand>
        <name>Mg(2+)</name>
        <dbReference type="ChEBI" id="CHEBI:18420"/>
    </ligand>
</feature>
<feature type="binding site" evidence="1">
    <location>
        <position position="144"/>
    </location>
    <ligand>
        <name>UDP-N-acetyl-alpha-D-glucosamine</name>
        <dbReference type="ChEBI" id="CHEBI:57705"/>
    </ligand>
</feature>
<feature type="binding site" evidence="1">
    <location>
        <position position="158"/>
    </location>
    <ligand>
        <name>UDP-N-acetyl-alpha-D-glucosamine</name>
        <dbReference type="ChEBI" id="CHEBI:57705"/>
    </ligand>
</feature>
<feature type="binding site" evidence="1">
    <location>
        <position position="173"/>
    </location>
    <ligand>
        <name>UDP-N-acetyl-alpha-D-glucosamine</name>
        <dbReference type="ChEBI" id="CHEBI:57705"/>
    </ligand>
</feature>
<feature type="binding site" evidence="1">
    <location>
        <position position="230"/>
    </location>
    <ligand>
        <name>Mg(2+)</name>
        <dbReference type="ChEBI" id="CHEBI:18420"/>
    </ligand>
</feature>
<feature type="binding site" evidence="1">
    <location>
        <position position="230"/>
    </location>
    <ligand>
        <name>UDP-N-acetyl-alpha-D-glucosamine</name>
        <dbReference type="ChEBI" id="CHEBI:57705"/>
    </ligand>
</feature>
<feature type="binding site" evidence="1">
    <location>
        <position position="319"/>
    </location>
    <ligand>
        <name>UDP-N-acetyl-alpha-D-glucosamine</name>
        <dbReference type="ChEBI" id="CHEBI:57705"/>
    </ligand>
</feature>
<feature type="binding site" evidence="1">
    <location>
        <position position="337"/>
    </location>
    <ligand>
        <name>UDP-N-acetyl-alpha-D-glucosamine</name>
        <dbReference type="ChEBI" id="CHEBI:57705"/>
    </ligand>
</feature>
<feature type="binding site" evidence="1">
    <location>
        <position position="352"/>
    </location>
    <ligand>
        <name>UDP-N-acetyl-alpha-D-glucosamine</name>
        <dbReference type="ChEBI" id="CHEBI:57705"/>
    </ligand>
</feature>
<feature type="binding site" evidence="1">
    <location>
        <position position="363"/>
    </location>
    <ligand>
        <name>UDP-N-acetyl-alpha-D-glucosamine</name>
        <dbReference type="ChEBI" id="CHEBI:57705"/>
    </ligand>
</feature>
<feature type="binding site" evidence="1">
    <location>
        <position position="366"/>
    </location>
    <ligand>
        <name>acetyl-CoA</name>
        <dbReference type="ChEBI" id="CHEBI:57288"/>
    </ligand>
</feature>
<feature type="binding site" evidence="1">
    <location>
        <begin position="372"/>
        <end position="373"/>
    </location>
    <ligand>
        <name>acetyl-CoA</name>
        <dbReference type="ChEBI" id="CHEBI:57288"/>
    </ligand>
</feature>
<feature type="binding site" evidence="1">
    <location>
        <position position="391"/>
    </location>
    <ligand>
        <name>acetyl-CoA</name>
        <dbReference type="ChEBI" id="CHEBI:57288"/>
    </ligand>
</feature>
<feature type="binding site" evidence="1">
    <location>
        <position position="409"/>
    </location>
    <ligand>
        <name>acetyl-CoA</name>
        <dbReference type="ChEBI" id="CHEBI:57288"/>
    </ligand>
</feature>
<feature type="binding site" evidence="1">
    <location>
        <position position="426"/>
    </location>
    <ligand>
        <name>acetyl-CoA</name>
        <dbReference type="ChEBI" id="CHEBI:57288"/>
    </ligand>
</feature>
<name>GLMU_RHOPS</name>
<reference key="1">
    <citation type="submission" date="2006-03" db="EMBL/GenBank/DDBJ databases">
        <title>Complete sequence of Rhodopseudomonas palustris BisB5.</title>
        <authorList>
            <consortium name="US DOE Joint Genome Institute"/>
            <person name="Copeland A."/>
            <person name="Lucas S."/>
            <person name="Lapidus A."/>
            <person name="Barry K."/>
            <person name="Detter J.C."/>
            <person name="Glavina del Rio T."/>
            <person name="Hammon N."/>
            <person name="Israni S."/>
            <person name="Dalin E."/>
            <person name="Tice H."/>
            <person name="Pitluck S."/>
            <person name="Chain P."/>
            <person name="Malfatti S."/>
            <person name="Shin M."/>
            <person name="Vergez L."/>
            <person name="Schmutz J."/>
            <person name="Larimer F."/>
            <person name="Land M."/>
            <person name="Hauser L."/>
            <person name="Pelletier D.A."/>
            <person name="Kyrpides N."/>
            <person name="Lykidis A."/>
            <person name="Oda Y."/>
            <person name="Harwood C.S."/>
            <person name="Richardson P."/>
        </authorList>
    </citation>
    <scope>NUCLEOTIDE SEQUENCE [LARGE SCALE GENOMIC DNA]</scope>
    <source>
        <strain>BisB5</strain>
    </source>
</reference>
<sequence>MTTRTSLTIVLAAGEGTRMRSSLPKVLHPVAGRPLLAHVLAAAPHGADDKLAVVIGPDHQAVADETKRIRPDAETFVQSERLGTAHAVLAAKQAIARGADELLIAFGDTPLISAETFARLREPLRNGSALVVLGFRAADPTGYGRLVVEGDQLAAIREQADASADELKITLCNAGVMAIDGRIALDVLAQIGNANKKGEYYLTDAVGIMRERGLRASVIETDEDEVRGINTKAQLAEAEAVMQTRLRQAAMTAGVTLISPETIHLAADTRFGKDVTIEQFVVIGPGVSIADGAVIHSFSHIVGASVGSNASVGPYARLRPGTSLGDGAKIGNFVETKAARIDAGAKVNHLTYIGDAHIGEGANIGAGTITCNYDGFNKHRTEIGAGAFIGSNSSLVAPVKIGVGAYVGSGSVVTKNVPDDSLAVERNDQTVRVGWAKRFRETSARARKPKTS</sequence>